<keyword id="KW-0030">Aminoacyl-tRNA synthetase</keyword>
<keyword id="KW-0067">ATP-binding</keyword>
<keyword id="KW-0963">Cytoplasm</keyword>
<keyword id="KW-0436">Ligase</keyword>
<keyword id="KW-0547">Nucleotide-binding</keyword>
<keyword id="KW-0648">Protein biosynthesis</keyword>
<keyword id="KW-1185">Reference proteome</keyword>
<protein>
    <recommendedName>
        <fullName evidence="1">Aspartate--tRNA(Asp/Asn) ligase</fullName>
        <ecNumber evidence="1">6.1.1.23</ecNumber>
    </recommendedName>
    <alternativeName>
        <fullName evidence="1">Aspartyl-tRNA synthetase</fullName>
        <shortName evidence="1">AspRS</shortName>
    </alternativeName>
    <alternativeName>
        <fullName evidence="1">Non-discriminating aspartyl-tRNA synthetase</fullName>
        <shortName evidence="1">ND-AspRS</shortName>
    </alternativeName>
</protein>
<organism>
    <name type="scientific">Chromobacterium violaceum (strain ATCC 12472 / DSM 30191 / JCM 1249 / CCUG 213 / NBRC 12614 / NCIMB 9131 / NCTC 9757 / MK)</name>
    <dbReference type="NCBI Taxonomy" id="243365"/>
    <lineage>
        <taxon>Bacteria</taxon>
        <taxon>Pseudomonadati</taxon>
        <taxon>Pseudomonadota</taxon>
        <taxon>Betaproteobacteria</taxon>
        <taxon>Neisseriales</taxon>
        <taxon>Chromobacteriaceae</taxon>
        <taxon>Chromobacterium</taxon>
    </lineage>
</organism>
<evidence type="ECO:0000255" key="1">
    <source>
        <dbReference type="HAMAP-Rule" id="MF_00044"/>
    </source>
</evidence>
<dbReference type="EC" id="6.1.1.23" evidence="1"/>
<dbReference type="EMBL" id="AE016825">
    <property type="protein sequence ID" value="AAQ61402.1"/>
    <property type="molecule type" value="Genomic_DNA"/>
</dbReference>
<dbReference type="RefSeq" id="WP_011137287.1">
    <property type="nucleotide sequence ID" value="NC_005085.1"/>
</dbReference>
<dbReference type="SMR" id="Q7NRP0"/>
<dbReference type="STRING" id="243365.CV_3740"/>
<dbReference type="KEGG" id="cvi:CV_3740"/>
<dbReference type="eggNOG" id="COG0173">
    <property type="taxonomic scope" value="Bacteria"/>
</dbReference>
<dbReference type="HOGENOM" id="CLU_014330_3_2_4"/>
<dbReference type="OrthoDB" id="9802326at2"/>
<dbReference type="Proteomes" id="UP000001424">
    <property type="component" value="Chromosome"/>
</dbReference>
<dbReference type="GO" id="GO:0005737">
    <property type="term" value="C:cytoplasm"/>
    <property type="evidence" value="ECO:0007669"/>
    <property type="project" value="UniProtKB-SubCell"/>
</dbReference>
<dbReference type="GO" id="GO:0004815">
    <property type="term" value="F:aspartate-tRNA ligase activity"/>
    <property type="evidence" value="ECO:0007669"/>
    <property type="project" value="UniProtKB-UniRule"/>
</dbReference>
<dbReference type="GO" id="GO:0050560">
    <property type="term" value="F:aspartate-tRNA(Asn) ligase activity"/>
    <property type="evidence" value="ECO:0007669"/>
    <property type="project" value="UniProtKB-EC"/>
</dbReference>
<dbReference type="GO" id="GO:0005524">
    <property type="term" value="F:ATP binding"/>
    <property type="evidence" value="ECO:0007669"/>
    <property type="project" value="UniProtKB-UniRule"/>
</dbReference>
<dbReference type="GO" id="GO:0003676">
    <property type="term" value="F:nucleic acid binding"/>
    <property type="evidence" value="ECO:0007669"/>
    <property type="project" value="InterPro"/>
</dbReference>
<dbReference type="GO" id="GO:0006422">
    <property type="term" value="P:aspartyl-tRNA aminoacylation"/>
    <property type="evidence" value="ECO:0007669"/>
    <property type="project" value="UniProtKB-UniRule"/>
</dbReference>
<dbReference type="CDD" id="cd00777">
    <property type="entry name" value="AspRS_core"/>
    <property type="match status" value="1"/>
</dbReference>
<dbReference type="CDD" id="cd04317">
    <property type="entry name" value="EcAspRS_like_N"/>
    <property type="match status" value="1"/>
</dbReference>
<dbReference type="Gene3D" id="3.30.930.10">
    <property type="entry name" value="Bira Bifunctional Protein, Domain 2"/>
    <property type="match status" value="1"/>
</dbReference>
<dbReference type="Gene3D" id="3.30.1360.30">
    <property type="entry name" value="GAD-like domain"/>
    <property type="match status" value="1"/>
</dbReference>
<dbReference type="Gene3D" id="2.40.50.140">
    <property type="entry name" value="Nucleic acid-binding proteins"/>
    <property type="match status" value="1"/>
</dbReference>
<dbReference type="HAMAP" id="MF_00044">
    <property type="entry name" value="Asp_tRNA_synth_type1"/>
    <property type="match status" value="1"/>
</dbReference>
<dbReference type="InterPro" id="IPR004364">
    <property type="entry name" value="Aa-tRNA-synt_II"/>
</dbReference>
<dbReference type="InterPro" id="IPR006195">
    <property type="entry name" value="aa-tRNA-synth_II"/>
</dbReference>
<dbReference type="InterPro" id="IPR045864">
    <property type="entry name" value="aa-tRNA-synth_II/BPL/LPL"/>
</dbReference>
<dbReference type="InterPro" id="IPR004524">
    <property type="entry name" value="Asp-tRNA-ligase_1"/>
</dbReference>
<dbReference type="InterPro" id="IPR047089">
    <property type="entry name" value="Asp-tRNA-ligase_1_N"/>
</dbReference>
<dbReference type="InterPro" id="IPR002312">
    <property type="entry name" value="Asp/Asn-tRNA-synth_IIb"/>
</dbReference>
<dbReference type="InterPro" id="IPR047090">
    <property type="entry name" value="AspRS_core"/>
</dbReference>
<dbReference type="InterPro" id="IPR004115">
    <property type="entry name" value="GAD-like_sf"/>
</dbReference>
<dbReference type="InterPro" id="IPR029351">
    <property type="entry name" value="GAD_dom"/>
</dbReference>
<dbReference type="InterPro" id="IPR012340">
    <property type="entry name" value="NA-bd_OB-fold"/>
</dbReference>
<dbReference type="InterPro" id="IPR004365">
    <property type="entry name" value="NA-bd_OB_tRNA"/>
</dbReference>
<dbReference type="NCBIfam" id="TIGR00459">
    <property type="entry name" value="aspS_bact"/>
    <property type="match status" value="1"/>
</dbReference>
<dbReference type="NCBIfam" id="NF001750">
    <property type="entry name" value="PRK00476.1"/>
    <property type="match status" value="1"/>
</dbReference>
<dbReference type="PANTHER" id="PTHR22594:SF5">
    <property type="entry name" value="ASPARTATE--TRNA LIGASE, MITOCHONDRIAL"/>
    <property type="match status" value="1"/>
</dbReference>
<dbReference type="PANTHER" id="PTHR22594">
    <property type="entry name" value="ASPARTYL/LYSYL-TRNA SYNTHETASE"/>
    <property type="match status" value="1"/>
</dbReference>
<dbReference type="Pfam" id="PF02938">
    <property type="entry name" value="GAD"/>
    <property type="match status" value="1"/>
</dbReference>
<dbReference type="Pfam" id="PF00152">
    <property type="entry name" value="tRNA-synt_2"/>
    <property type="match status" value="1"/>
</dbReference>
<dbReference type="Pfam" id="PF01336">
    <property type="entry name" value="tRNA_anti-codon"/>
    <property type="match status" value="1"/>
</dbReference>
<dbReference type="PRINTS" id="PR01042">
    <property type="entry name" value="TRNASYNTHASP"/>
</dbReference>
<dbReference type="SUPFAM" id="SSF55681">
    <property type="entry name" value="Class II aaRS and biotin synthetases"/>
    <property type="match status" value="1"/>
</dbReference>
<dbReference type="SUPFAM" id="SSF55261">
    <property type="entry name" value="GAD domain-like"/>
    <property type="match status" value="1"/>
</dbReference>
<dbReference type="SUPFAM" id="SSF50249">
    <property type="entry name" value="Nucleic acid-binding proteins"/>
    <property type="match status" value="1"/>
</dbReference>
<dbReference type="PROSITE" id="PS50862">
    <property type="entry name" value="AA_TRNA_LIGASE_II"/>
    <property type="match status" value="1"/>
</dbReference>
<sequence length="597" mass="67298">MRTDYCGLIDKKYLGQTVTVKGWAHRRRDHGGVIFIDLRDREGLVQVVIDPDTPEAFKLADSSRGEYVLSITGIVRERPAGTANSKMISGEIEILAKEIEILNAAATPPFQIDDENLSENVRLTNRVIDLRRPAMQKNLRLRYKVAMGVRNHLDKQGFIDIETPMLTRSTPEGARDYLVPSRVHPGEFFALPQSPQLFKQLLMVAGFDRYYQITKCFRDEDLRADRQPEFTQIDIETSFLNEDEIMDITEGMTKEIFQDVLGVTLPTFPRMTYGDAMFYYGSDKPDMRVALKFTELTDVMKSEEFKVFRGAADMANGRVVALRVPNGASFSRKEIDDYTQFVAIYGAKGLAYIKVNDVTKLNEEGLQSPIVKFLSANGLKEIIARTGAQNGDIIFFGADKAKVVNEAIGALRIKIGHEHGLENGYFVKEWRPLWVVDFPMFEHDEEEDRWTACHHPFTSPKPGHEDLMATDPGKCLARAYDMVLNGWEIGGGSIRIHRADIQEKVFGALKISPEEQQNKFGFLLDNLKFGAPPHGGLAFGLDRLVTLMCGAESIRDVIAFPKTQRAQCLLTNAPNAVDDKQLRELNLRLRQKAEPSA</sequence>
<proteinExistence type="inferred from homology"/>
<reference key="1">
    <citation type="journal article" date="2003" name="Proc. Natl. Acad. Sci. U.S.A.">
        <title>The complete genome sequence of Chromobacterium violaceum reveals remarkable and exploitable bacterial adaptability.</title>
        <authorList>
            <person name="Vasconcelos A.T.R."/>
            <person name="de Almeida D.F."/>
            <person name="Hungria M."/>
            <person name="Guimaraes C.T."/>
            <person name="Antonio R.V."/>
            <person name="Almeida F.C."/>
            <person name="de Almeida L.G.P."/>
            <person name="de Almeida R."/>
            <person name="Alves-Gomes J.A."/>
            <person name="Andrade E.M."/>
            <person name="Araripe J."/>
            <person name="de Araujo M.F.F."/>
            <person name="Astolfi-Filho S."/>
            <person name="Azevedo V."/>
            <person name="Baptista A.J."/>
            <person name="Bataus L.A.M."/>
            <person name="Batista J.S."/>
            <person name="Belo A."/>
            <person name="van den Berg C."/>
            <person name="Bogo M."/>
            <person name="Bonatto S."/>
            <person name="Bordignon J."/>
            <person name="Brigido M.M."/>
            <person name="Brito C.A."/>
            <person name="Brocchi M."/>
            <person name="Burity H.A."/>
            <person name="Camargo A.A."/>
            <person name="Cardoso D.D.P."/>
            <person name="Carneiro N.P."/>
            <person name="Carraro D.M."/>
            <person name="Carvalho C.M.B."/>
            <person name="Cascardo J.C.M."/>
            <person name="Cavada B.S."/>
            <person name="Chueire L.M.O."/>
            <person name="Creczynski-Pasa T.B."/>
            <person name="Cunha-Junior N.C."/>
            <person name="Fagundes N."/>
            <person name="Falcao C.L."/>
            <person name="Fantinatti F."/>
            <person name="Farias I.P."/>
            <person name="Felipe M.S.S."/>
            <person name="Ferrari L.P."/>
            <person name="Ferro J.A."/>
            <person name="Ferro M.I.T."/>
            <person name="Franco G.R."/>
            <person name="Freitas N.S.A."/>
            <person name="Furlan L.R."/>
            <person name="Gazzinelli R.T."/>
            <person name="Gomes E.A."/>
            <person name="Goncalves P.R."/>
            <person name="Grangeiro T.B."/>
            <person name="Grattapaglia D."/>
            <person name="Grisard E.C."/>
            <person name="Hanna E.S."/>
            <person name="Jardim S.N."/>
            <person name="Laurino J."/>
            <person name="Leoi L.C.T."/>
            <person name="Lima L.F.A."/>
            <person name="Loureiro M.F."/>
            <person name="Lyra M.C.C.P."/>
            <person name="Madeira H.M.F."/>
            <person name="Manfio G.P."/>
            <person name="Maranhao A.Q."/>
            <person name="Martins W.S."/>
            <person name="di Mauro S.M.Z."/>
            <person name="de Medeiros S.R.B."/>
            <person name="Meissner R.V."/>
            <person name="Moreira M.A.M."/>
            <person name="Nascimento F.F."/>
            <person name="Nicolas M.F."/>
            <person name="Oliveira J.G."/>
            <person name="Oliveira S.C."/>
            <person name="Paixao R.F.C."/>
            <person name="Parente J.A."/>
            <person name="Pedrosa F.O."/>
            <person name="Pena S.D.J."/>
            <person name="Pereira J.O."/>
            <person name="Pereira M."/>
            <person name="Pinto L.S.R.C."/>
            <person name="Pinto L.S."/>
            <person name="Porto J.I.R."/>
            <person name="Potrich D.P."/>
            <person name="Ramalho-Neto C.E."/>
            <person name="Reis A.M.M."/>
            <person name="Rigo L.U."/>
            <person name="Rondinelli E."/>
            <person name="Santos E.B.P."/>
            <person name="Santos F.R."/>
            <person name="Schneider M.P.C."/>
            <person name="Seuanez H.N."/>
            <person name="Silva A.M.R."/>
            <person name="da Silva A.L.C."/>
            <person name="Silva D.W."/>
            <person name="Silva R."/>
            <person name="Simoes I.C."/>
            <person name="Simon D."/>
            <person name="Soares C.M.A."/>
            <person name="Soares R.B.A."/>
            <person name="Souza E.M."/>
            <person name="Souza K.R.L."/>
            <person name="Souza R.C."/>
            <person name="Steffens M.B.R."/>
            <person name="Steindel M."/>
            <person name="Teixeira S.R."/>
            <person name="Urmenyi T."/>
            <person name="Vettore A."/>
            <person name="Wassem R."/>
            <person name="Zaha A."/>
            <person name="Simpson A.J.G."/>
        </authorList>
    </citation>
    <scope>NUCLEOTIDE SEQUENCE [LARGE SCALE GENOMIC DNA]</scope>
    <source>
        <strain>ATCC 12472 / DSM 30191 / JCM 1249 / CCUG 213 / NBRC 12614 / NCIMB 9131 / NCTC 9757 / MK</strain>
    </source>
</reference>
<accession>Q7NRP0</accession>
<name>SYDND_CHRVO</name>
<gene>
    <name evidence="1" type="primary">aspS</name>
    <name type="ordered locus">CV_3740</name>
</gene>
<comment type="function">
    <text evidence="1">Aspartyl-tRNA synthetase with relaxed tRNA specificity since it is able to aspartylate not only its cognate tRNA(Asp) but also tRNA(Asn). Reaction proceeds in two steps: L-aspartate is first activated by ATP to form Asp-AMP and then transferred to the acceptor end of tRNA(Asp/Asn).</text>
</comment>
<comment type="catalytic activity">
    <reaction evidence="1">
        <text>tRNA(Asx) + L-aspartate + ATP = L-aspartyl-tRNA(Asx) + AMP + diphosphate</text>
        <dbReference type="Rhea" id="RHEA:18349"/>
        <dbReference type="Rhea" id="RHEA-COMP:9710"/>
        <dbReference type="Rhea" id="RHEA-COMP:9711"/>
        <dbReference type="ChEBI" id="CHEBI:29991"/>
        <dbReference type="ChEBI" id="CHEBI:30616"/>
        <dbReference type="ChEBI" id="CHEBI:33019"/>
        <dbReference type="ChEBI" id="CHEBI:78442"/>
        <dbReference type="ChEBI" id="CHEBI:78516"/>
        <dbReference type="ChEBI" id="CHEBI:456215"/>
        <dbReference type="EC" id="6.1.1.23"/>
    </reaction>
</comment>
<comment type="subunit">
    <text evidence="1">Homodimer.</text>
</comment>
<comment type="subcellular location">
    <subcellularLocation>
        <location evidence="1">Cytoplasm</location>
    </subcellularLocation>
</comment>
<comment type="similarity">
    <text evidence="1">Belongs to the class-II aminoacyl-tRNA synthetase family. Type 1 subfamily.</text>
</comment>
<feature type="chain" id="PRO_0000110857" description="Aspartate--tRNA(Asp/Asn) ligase">
    <location>
        <begin position="1"/>
        <end position="597"/>
    </location>
</feature>
<feature type="region of interest" description="Aspartate" evidence="1">
    <location>
        <begin position="196"/>
        <end position="199"/>
    </location>
</feature>
<feature type="binding site" evidence="1">
    <location>
        <position position="172"/>
    </location>
    <ligand>
        <name>L-aspartate</name>
        <dbReference type="ChEBI" id="CHEBI:29991"/>
    </ligand>
</feature>
<feature type="binding site" evidence="1">
    <location>
        <begin position="218"/>
        <end position="220"/>
    </location>
    <ligand>
        <name>ATP</name>
        <dbReference type="ChEBI" id="CHEBI:30616"/>
    </ligand>
</feature>
<feature type="binding site" evidence="1">
    <location>
        <position position="218"/>
    </location>
    <ligand>
        <name>L-aspartate</name>
        <dbReference type="ChEBI" id="CHEBI:29991"/>
    </ligand>
</feature>
<feature type="binding site" evidence="1">
    <location>
        <position position="227"/>
    </location>
    <ligand>
        <name>ATP</name>
        <dbReference type="ChEBI" id="CHEBI:30616"/>
    </ligand>
</feature>
<feature type="binding site" evidence="1">
    <location>
        <position position="454"/>
    </location>
    <ligand>
        <name>L-aspartate</name>
        <dbReference type="ChEBI" id="CHEBI:29991"/>
    </ligand>
</feature>
<feature type="binding site" evidence="1">
    <location>
        <position position="488"/>
    </location>
    <ligand>
        <name>ATP</name>
        <dbReference type="ChEBI" id="CHEBI:30616"/>
    </ligand>
</feature>
<feature type="binding site" evidence="1">
    <location>
        <position position="495"/>
    </location>
    <ligand>
        <name>L-aspartate</name>
        <dbReference type="ChEBI" id="CHEBI:29991"/>
    </ligand>
</feature>
<feature type="binding site" evidence="1">
    <location>
        <begin position="540"/>
        <end position="543"/>
    </location>
    <ligand>
        <name>ATP</name>
        <dbReference type="ChEBI" id="CHEBI:30616"/>
    </ligand>
</feature>
<feature type="site" description="Important for tRNA non-discrimination" evidence="1">
    <location>
        <position position="30"/>
    </location>
</feature>
<feature type="site" description="Important for tRNA non-discrimination" evidence="1">
    <location>
        <position position="81"/>
    </location>
</feature>